<comment type="function">
    <text evidence="3 4 5 7">CRISPR (clustered regularly interspaced short palindromic repeat), is an adaptive immune system that provides protection against mobile genetic elements (viruses, transposable elements and conjugative plasmids) (PubMed:21255106, PubMed:24793649, PubMed:24920831). CRISPR clusters contain sequences complementary to antecedent mobile elements and target invading nucleic acids. CRISPR clusters are transcribed and processed into CRISPR RNA (crRNA). The Cas1-Cas2 complex is involved in CRISPR adaptation, the first stage of CRISPR immunity, being required for the addition/removal of CRISPR spacers at the leader end of the CRISPR locus (PubMed:24793649, PubMed:24920831, PubMed:25707795). The Cas1-Cas2 complex introduces staggered nicks into both strands of the CRISPR array near the leader repeat and joins the 5'-ends of the repeat strands with the 3'-ends of the new spacer sequence (PubMed:24920831). Spacer DNA integration requires supercoiled target DNA and 3'-OH ends on the inserted (spacer) DNA and probably initiates with a nucleophilic attack of the C 3'-OH end of the protospacer on the minus strand of the first repeat sequence (PubMed:25707795). Expression of Cas1-Cas2 in a strain lacking both genes permits spacer acquisition (PubMed:24793649, PubMed:24920831). Cas2 not seen to bind DNA alone; the Cas1-Cas2 complex preferentially binds CRISPR-locus DNA (PubMed:24793649). Highest binding is seen to a dual forked DNA complex with 3'-overhangs and a protospacer-adjacent motif-complement specifically positioned (PubMed:26478180). The protospacer DNA lies across a flat surface extending from 1 Cas1 dimer, across the Cas2 dimer and contacting the other Cas1 dimer; the 23 bp-long ds section of the DNA is bracketed by 1 Tyr-22 from each of the Cas1 dimers (PubMed:26478180, PubMed:26503043). Cas1 cuts within the 3'-overhang, to generate a 33-nucleotide DNA that is probably incorporated into the CRISPR leader by a cut-and-paste mechanism (PubMed:26478180). This subunit's probable nuclease activity is not required for spacer acquisition (PubMed:24793649).</text>
</comment>
<comment type="subunit">
    <text evidence="4 5 6 7 8 10 11">Homodimer (Ref.10). Part of the Cas1-Cas2 complex (PubMed:24793649, PubMed:24920831, PubMed:25707795, PubMed:26478180, PubMed:26503043, Ref.12). Forms a hexamer with 2 Cas1 dimers sandwiching a Cas2 dimer (PubMed:24793649). The DNA lies across a flat surface extending from 1 Cas1 dimer, across the Cas2 dimer and contacting the other Cas1 dimer. Only 1 Cas1 protein from each dimer is catalytic, the other interacts with the Cas2 dimer and possibly target DNA (PubMed:26478180, PubMed:26503043).</text>
</comment>
<comment type="interaction">
    <interactant intactId="EBI-9150552">
        <id>P45956</id>
    </interactant>
    <interactant intactId="EBI-1130209">
        <id>Q46896</id>
        <label>ygbT</label>
    </interactant>
    <organismsDiffer>false</organismsDiffer>
    <experiments>8</experiments>
</comment>
<comment type="induction">
    <text evidence="1 2 3">Repressed by H-NS (PubMed:20132443). Activated by LeuO (PubMed:19429622). Activated by the BaeSR two-component regulatory system, possibly due to envelope stress (PubMed:21255106). Part of the casABCDE-ygbT-ygbF operon (PubMed:19429622).</text>
</comment>
<comment type="domain">
    <text evidence="7">Substrate DNA-binding induces large structural changes that generate a surface for DNA-binding across the Cas2 dimer and formation of an optimal catalytic site (PubMed:26478180).</text>
</comment>
<comment type="disruption phenotype">
    <text evidence="3">Loss of plasmid silencing (PubMed:21255106).</text>
</comment>
<comment type="similarity">
    <text evidence="9">Belongs to the CRISPR-associated endoribonuclease Cas2 protein family. E.coli-subtype subfamily.</text>
</comment>
<evidence type="ECO:0000269" key="1">
    <source>
    </source>
</evidence>
<evidence type="ECO:0000269" key="2">
    <source>
    </source>
</evidence>
<evidence type="ECO:0000269" key="3">
    <source>
    </source>
</evidence>
<evidence type="ECO:0000269" key="4">
    <source>
    </source>
</evidence>
<evidence type="ECO:0000269" key="5">
    <source>
    </source>
</evidence>
<evidence type="ECO:0000269" key="6">
    <source>
    </source>
</evidence>
<evidence type="ECO:0000269" key="7">
    <source>
    </source>
</evidence>
<evidence type="ECO:0000269" key="8">
    <source>
    </source>
</evidence>
<evidence type="ECO:0000305" key="9"/>
<evidence type="ECO:0000305" key="10">
    <source ref="10"/>
</evidence>
<evidence type="ECO:0000305" key="11">
    <source ref="12"/>
</evidence>
<evidence type="ECO:0007829" key="12">
    <source>
        <dbReference type="PDB" id="4MAK"/>
    </source>
</evidence>
<evidence type="ECO:0007829" key="13">
    <source>
        <dbReference type="PDB" id="4P6I"/>
    </source>
</evidence>
<dbReference type="EC" id="3.1.-.-"/>
<dbReference type="EMBL" id="M27059">
    <property type="status" value="NOT_ANNOTATED_CDS"/>
    <property type="molecule type" value="Unassigned_DNA"/>
</dbReference>
<dbReference type="EMBL" id="U29579">
    <property type="protein sequence ID" value="AAA69264.1"/>
    <property type="molecule type" value="Genomic_DNA"/>
</dbReference>
<dbReference type="EMBL" id="U00096">
    <property type="protein sequence ID" value="AAC75796.2"/>
    <property type="molecule type" value="Genomic_DNA"/>
</dbReference>
<dbReference type="EMBL" id="AP009048">
    <property type="protein sequence ID" value="BAE76831.1"/>
    <property type="molecule type" value="Genomic_DNA"/>
</dbReference>
<dbReference type="PIR" id="F65056">
    <property type="entry name" value="F65056"/>
</dbReference>
<dbReference type="RefSeq" id="NP_417234.2">
    <property type="nucleotide sequence ID" value="NC_000913.3"/>
</dbReference>
<dbReference type="PDB" id="4MAK">
    <property type="method" value="X-ray"/>
    <property type="resolution" value="1.10 A"/>
    <property type="chains" value="A/B=1-94"/>
</dbReference>
<dbReference type="PDB" id="4P6I">
    <property type="method" value="X-ray"/>
    <property type="resolution" value="2.30 A"/>
    <property type="chains" value="A/B=1-94"/>
</dbReference>
<dbReference type="PDB" id="4QDL">
    <property type="method" value="X-ray"/>
    <property type="resolution" value="2.70 A"/>
    <property type="chains" value="E/F=1-94"/>
</dbReference>
<dbReference type="PDB" id="5DLJ">
    <property type="method" value="X-ray"/>
    <property type="resolution" value="2.60 A"/>
    <property type="chains" value="E/F=1-78"/>
</dbReference>
<dbReference type="PDB" id="5DQT">
    <property type="method" value="X-ray"/>
    <property type="resolution" value="3.10 A"/>
    <property type="chains" value="E/F/M/N=1-94"/>
</dbReference>
<dbReference type="PDB" id="5DQU">
    <property type="method" value="X-ray"/>
    <property type="resolution" value="4.50 A"/>
    <property type="chains" value="E/F=1-94"/>
</dbReference>
<dbReference type="PDB" id="5DQZ">
    <property type="method" value="X-ray"/>
    <property type="resolution" value="2.70 A"/>
    <property type="chains" value="E/F=1-94"/>
</dbReference>
<dbReference type="PDB" id="5DS4">
    <property type="method" value="X-ray"/>
    <property type="resolution" value="3.20 A"/>
    <property type="chains" value="E/F=1-94"/>
</dbReference>
<dbReference type="PDB" id="5DS5">
    <property type="method" value="X-ray"/>
    <property type="resolution" value="2.95 A"/>
    <property type="chains" value="E/F=1-94"/>
</dbReference>
<dbReference type="PDB" id="5DS6">
    <property type="method" value="X-ray"/>
    <property type="resolution" value="3.35 A"/>
    <property type="chains" value="E/F=1-94"/>
</dbReference>
<dbReference type="PDB" id="5VVJ">
    <property type="method" value="X-ray"/>
    <property type="resolution" value="3.89 A"/>
    <property type="chains" value="E/F=1-94"/>
</dbReference>
<dbReference type="PDB" id="5VVK">
    <property type="method" value="X-ray"/>
    <property type="resolution" value="2.90 A"/>
    <property type="chains" value="E/F=1-94"/>
</dbReference>
<dbReference type="PDB" id="5VVL">
    <property type="method" value="X-ray"/>
    <property type="resolution" value="3.31 A"/>
    <property type="chains" value="E/F=1-94"/>
</dbReference>
<dbReference type="PDB" id="5WFE">
    <property type="method" value="EM"/>
    <property type="resolution" value="3.64 A"/>
    <property type="chains" value="E/F=1-94"/>
</dbReference>
<dbReference type="PDBsum" id="4MAK"/>
<dbReference type="PDBsum" id="4P6I"/>
<dbReference type="PDBsum" id="4QDL"/>
<dbReference type="PDBsum" id="5DLJ"/>
<dbReference type="PDBsum" id="5DQT"/>
<dbReference type="PDBsum" id="5DQU"/>
<dbReference type="PDBsum" id="5DQZ"/>
<dbReference type="PDBsum" id="5DS4"/>
<dbReference type="PDBsum" id="5DS5"/>
<dbReference type="PDBsum" id="5DS6"/>
<dbReference type="PDBsum" id="5VVJ"/>
<dbReference type="PDBsum" id="5VVK"/>
<dbReference type="PDBsum" id="5VVL"/>
<dbReference type="PDBsum" id="5WFE"/>
<dbReference type="EMDB" id="EMD-8827"/>
<dbReference type="SMR" id="P45956"/>
<dbReference type="BioGRID" id="4259585">
    <property type="interactions" value="143"/>
</dbReference>
<dbReference type="BioGRID" id="851545">
    <property type="interactions" value="2"/>
</dbReference>
<dbReference type="ComplexPortal" id="CPX-996">
    <property type="entry name" value="Cas1-Cas2 complex"/>
</dbReference>
<dbReference type="DIP" id="DIP-12109N"/>
<dbReference type="FunCoup" id="P45956">
    <property type="interactions" value="150"/>
</dbReference>
<dbReference type="IntAct" id="P45956">
    <property type="interactions" value="3"/>
</dbReference>
<dbReference type="STRING" id="511145.b2754"/>
<dbReference type="PaxDb" id="511145-b2754"/>
<dbReference type="EnsemblBacteria" id="AAC75796">
    <property type="protein sequence ID" value="AAC75796"/>
    <property type="gene ID" value="b2754"/>
</dbReference>
<dbReference type="GeneID" id="947213"/>
<dbReference type="KEGG" id="ecj:JW5438"/>
<dbReference type="KEGG" id="eco:b2754"/>
<dbReference type="KEGG" id="ecoc:C3026_15140"/>
<dbReference type="PATRIC" id="fig|1411691.4.peg.3984"/>
<dbReference type="EchoBASE" id="EB2694"/>
<dbReference type="eggNOG" id="COG0847">
    <property type="taxonomic scope" value="Bacteria"/>
</dbReference>
<dbReference type="HOGENOM" id="CLU_151313_1_0_6"/>
<dbReference type="InParanoid" id="P45956"/>
<dbReference type="OMA" id="TNNEQGF"/>
<dbReference type="OrthoDB" id="8527479at2"/>
<dbReference type="PhylomeDB" id="P45956"/>
<dbReference type="BioCyc" id="EcoCyc:EG12845-MONOMER"/>
<dbReference type="EvolutionaryTrace" id="P45956"/>
<dbReference type="PRO" id="PR:P45956"/>
<dbReference type="Proteomes" id="UP000000625">
    <property type="component" value="Chromosome"/>
</dbReference>
<dbReference type="GO" id="GO:0003677">
    <property type="term" value="F:DNA binding"/>
    <property type="evidence" value="ECO:0007669"/>
    <property type="project" value="UniProtKB-KW"/>
</dbReference>
<dbReference type="GO" id="GO:0004519">
    <property type="term" value="F:endonuclease activity"/>
    <property type="evidence" value="ECO:0007669"/>
    <property type="project" value="UniProtKB-KW"/>
</dbReference>
<dbReference type="GO" id="GO:0099048">
    <property type="term" value="P:CRISPR-cas system"/>
    <property type="evidence" value="ECO:0000314"/>
    <property type="project" value="ComplexPortal"/>
</dbReference>
<dbReference type="GO" id="GO:0051607">
    <property type="term" value="P:defense response to virus"/>
    <property type="evidence" value="ECO:0007669"/>
    <property type="project" value="UniProtKB-KW"/>
</dbReference>
<dbReference type="GO" id="GO:0043571">
    <property type="term" value="P:maintenance of CRISPR repeat elements"/>
    <property type="evidence" value="ECO:0000314"/>
    <property type="project" value="ComplexPortal"/>
</dbReference>
<dbReference type="CDD" id="cd09648">
    <property type="entry name" value="Cas2_I-E"/>
    <property type="match status" value="1"/>
</dbReference>
<dbReference type="FunFam" id="3.30.70.240:FF:000029">
    <property type="entry name" value="CRISPR-associated endoribonuclease Cas2"/>
    <property type="match status" value="1"/>
</dbReference>
<dbReference type="Gene3D" id="3.30.70.240">
    <property type="match status" value="1"/>
</dbReference>
<dbReference type="InterPro" id="IPR010152">
    <property type="entry name" value="CRISPR-assoc_prot_Cas2_sub"/>
</dbReference>
<dbReference type="NCBIfam" id="TIGR01873">
    <property type="entry name" value="cas_CT1978"/>
    <property type="match status" value="1"/>
</dbReference>
<dbReference type="Pfam" id="PF09707">
    <property type="entry name" value="Cas_Cas2CT1978"/>
    <property type="match status" value="1"/>
</dbReference>
<organism>
    <name type="scientific">Escherichia coli (strain K12)</name>
    <dbReference type="NCBI Taxonomy" id="83333"/>
    <lineage>
        <taxon>Bacteria</taxon>
        <taxon>Pseudomonadati</taxon>
        <taxon>Pseudomonadota</taxon>
        <taxon>Gammaproteobacteria</taxon>
        <taxon>Enterobacterales</taxon>
        <taxon>Enterobacteriaceae</taxon>
        <taxon>Escherichia</taxon>
    </lineage>
</organism>
<sequence>MSMLVVVTENVPPRLRGRLAIWLLEVRAGVYVGDVSAKIREMIWEQIAGLAEEGNVVMAWATNTETGFEFQTFGLNRRTPVDLDGLRLVSFLPV</sequence>
<keyword id="KW-0002">3D-structure</keyword>
<keyword id="KW-0051">Antiviral defense</keyword>
<keyword id="KW-0238">DNA-binding</keyword>
<keyword id="KW-0255">Endonuclease</keyword>
<keyword id="KW-0378">Hydrolase</keyword>
<keyword id="KW-0540">Nuclease</keyword>
<keyword id="KW-1185">Reference proteome</keyword>
<proteinExistence type="evidence at protein level"/>
<reference key="1">
    <citation type="journal article" date="1989" name="J. Bacteriol.">
        <title>Unusual nucleotide arrangement with repeated sequences in the Escherichia coli K-12 chromosome.</title>
        <authorList>
            <person name="Nakata A."/>
            <person name="Amemura M."/>
            <person name="Makino K."/>
        </authorList>
    </citation>
    <scope>NUCLEOTIDE SEQUENCE [GENOMIC DNA]</scope>
    <source>
        <strain>K12</strain>
    </source>
</reference>
<reference key="2">
    <citation type="journal article" date="1997" name="Science">
        <title>The complete genome sequence of Escherichia coli K-12.</title>
        <authorList>
            <person name="Blattner F.R."/>
            <person name="Plunkett G. III"/>
            <person name="Bloch C.A."/>
            <person name="Perna N.T."/>
            <person name="Burland V."/>
            <person name="Riley M."/>
            <person name="Collado-Vides J."/>
            <person name="Glasner J.D."/>
            <person name="Rode C.K."/>
            <person name="Mayhew G.F."/>
            <person name="Gregor J."/>
            <person name="Davis N.W."/>
            <person name="Kirkpatrick H.A."/>
            <person name="Goeden M.A."/>
            <person name="Rose D.J."/>
            <person name="Mau B."/>
            <person name="Shao Y."/>
        </authorList>
    </citation>
    <scope>NUCLEOTIDE SEQUENCE [LARGE SCALE GENOMIC DNA]</scope>
    <source>
        <strain>K12 / MG1655 / ATCC 47076</strain>
    </source>
</reference>
<reference key="3">
    <citation type="journal article" date="2006" name="Mol. Syst. Biol.">
        <title>Highly accurate genome sequences of Escherichia coli K-12 strains MG1655 and W3110.</title>
        <authorList>
            <person name="Hayashi K."/>
            <person name="Morooka N."/>
            <person name="Yamamoto Y."/>
            <person name="Fujita K."/>
            <person name="Isono K."/>
            <person name="Choi S."/>
            <person name="Ohtsubo E."/>
            <person name="Baba T."/>
            <person name="Wanner B.L."/>
            <person name="Mori H."/>
            <person name="Horiuchi T."/>
        </authorList>
    </citation>
    <scope>NUCLEOTIDE SEQUENCE [LARGE SCALE GENOMIC DNA]</scope>
    <source>
        <strain>K12 / W3110 / ATCC 27325 / DSM 5911</strain>
    </source>
</reference>
<reference key="4">
    <citation type="journal article" date="1995" name="Nucleic Acids Res.">
        <title>Detection of new genes in a bacterial genome using Markov models for three gene classes.</title>
        <authorList>
            <person name="Borodovsky M."/>
            <person name="McIninch J."/>
            <person name="Koonin E.V."/>
            <person name="Rudd K.E."/>
            <person name="Medigue C."/>
            <person name="Danchin A."/>
        </authorList>
    </citation>
    <scope>IDENTIFICATION</scope>
</reference>
<reference key="5">
    <citation type="journal article" date="2009" name="J. Bacteriol.">
        <title>Involvement of the leucine response transcription factor LeuO in regulation of the genes for sulfa drug efflux.</title>
        <authorList>
            <person name="Shimada T."/>
            <person name="Yamamoto K."/>
            <person name="Ishihama A."/>
        </authorList>
    </citation>
    <scope>OPERON STRUCTURE</scope>
    <scope>INDUCTION BY LEUO</scope>
    <source>
        <strain>K12 / BW25113</strain>
    </source>
</reference>
<reference key="6">
    <citation type="journal article" date="2010" name="Mol. Microbiol.">
        <title>Identification and characterization of E. coli CRISPR-cas promoters and their silencing by H-NS.</title>
        <authorList>
            <person name="Pul U."/>
            <person name="Wurm R."/>
            <person name="Arslan Z."/>
            <person name="Geissen R."/>
            <person name="Hofmann N."/>
            <person name="Wagner R."/>
        </authorList>
    </citation>
    <scope>REPRESSION BY H-NS</scope>
    <source>
        <strain>K12</strain>
    </source>
</reference>
<reference key="7">
    <citation type="journal article" date="2011" name="Mol. Microbiol.">
        <title>Envelope stress is a trigger of CRISPR RNA-mediated DNA silencing in Escherichia coli.</title>
        <authorList>
            <person name="Perez-Rodriguez R."/>
            <person name="Haitjema C."/>
            <person name="Huang Q."/>
            <person name="Nam K.H."/>
            <person name="Bernardis S."/>
            <person name="Ke A."/>
            <person name="DeLisa M.P."/>
        </authorList>
    </citation>
    <scope>INDUCTION BY BAER</scope>
    <scope>ROLE IN PLASMID SILENCING</scope>
    <scope>DISRUPTION PHENOTYPE</scope>
    <source>
        <strain>K12 / BW25113</strain>
    </source>
</reference>
<reference key="8">
    <citation type="journal article" date="2014" name="Nucleic Acids Res.">
        <title>Detection and characterization of spacer integration intermediates in type I-E CRISPR-Cas system.</title>
        <authorList>
            <person name="Arslan Z."/>
            <person name="Hermanns V."/>
            <person name="Wurm R."/>
            <person name="Wagner R."/>
            <person name="Pul U."/>
        </authorList>
    </citation>
    <scope>FUNCTION AS A SPACER INTEGRASE</scope>
    <scope>SUBUNIT</scope>
    <source>
        <strain>K12 / MG1655 / ATCC 47076</strain>
    </source>
</reference>
<reference key="9">
    <citation type="journal article" date="2015" name="Nature">
        <title>Integrase-mediated spacer acquisition during CRISPR-Cas adaptive immunity.</title>
        <authorList>
            <person name="Nunez J.K."/>
            <person name="Lee A.S."/>
            <person name="Engelman A."/>
            <person name="Doudna J.A."/>
        </authorList>
    </citation>
    <scope>FUNCTION</scope>
    <scope>SUBUNIT</scope>
    <scope>MUTAGENESIS OF GLU-9 AND 79-THR--VAL-94</scope>
    <source>
        <strain>K12 / MG1655 / ATCC 47076</strain>
    </source>
</reference>
<reference key="10">
    <citation type="submission" date="2013-08" db="PDB data bank">
        <title>Crystal structure of a putative ssRNA endonuclease Cas2, CRISPR adaptation protein from E.coli.</title>
        <authorList>
            <person name="Nocek B."/>
            <person name="Skarina T."/>
            <person name="Brown G."/>
            <person name="Yakunin A."/>
            <person name="Joachimiak A."/>
        </authorList>
    </citation>
    <scope>X-RAY CRYSTALLOGRAPHY (1.1 ANGSTROMS)</scope>
</reference>
<reference key="11">
    <citation type="journal article" date="2014" name="Nat. Struct. Mol. Biol.">
        <title>Cas1-Cas2 complex formation mediates spacer acquisition during CRISPR-Cas adaptive immunity.</title>
        <authorList>
            <person name="Nunez J.K."/>
            <person name="Kranzusch P.J."/>
            <person name="Noeske J."/>
            <person name="Wright A.V."/>
            <person name="Davies C.W."/>
            <person name="Doudna J.A."/>
        </authorList>
    </citation>
    <scope>X-RAY CRYSTALLOGRAPHY (2.3 ANGSTROMS) IN COMPLEX WITH CAS1</scope>
    <scope>FUNCTION IN SPACER ACQUISITION</scope>
    <scope>INTERACTION WITH CAS1 (YGBT)</scope>
    <scope>SUBUNIT</scope>
    <scope>MUTAGENESIS OF GLU-9; ASN-10; ARG-14; ARG-16; ARG-18; ARG-27; GLU-65; 79-THR--VAL-94 AND ASP-84</scope>
    <source>
        <strain>K12 / MG1655 / ATCC 47076</strain>
    </source>
</reference>
<reference key="12">
    <citation type="submission" date="2014-05" db="PDB data bank">
        <title>Crystal structure of E.coli Cas1-Cas2 complex.</title>
        <authorList>
            <person name="Tamulaitiene G."/>
            <person name="Sinkunas T."/>
            <person name="Silanskas A."/>
            <person name="Gasiunas G."/>
            <person name="Grazulis S."/>
            <person name="Siksnys V."/>
        </authorList>
    </citation>
    <scope>X-RAY CRYSTALLOGRAPHY (2.70 ANGSTROMS) IN COMPLEX WITH CAS1</scope>
    <scope>SUBUNIT</scope>
</reference>
<reference key="13">
    <citation type="journal article" date="2015" name="Cell">
        <title>Structural and mechanistic basis of PAM-dependent spacer acquisition in CRISPR-Cas systems.</title>
        <authorList>
            <person name="Wang J."/>
            <person name="Li J."/>
            <person name="Zhao H."/>
            <person name="Sheng G."/>
            <person name="Wang M."/>
            <person name="Yin M."/>
            <person name="Wang Y."/>
        </authorList>
    </citation>
    <scope>X-RAY CRYSTALLOGRAPHY (2.60 ANGSTROMS) OF 1-78 IN COMPLEX WITH CAS1 AND DNA</scope>
    <scope>FUNCTION</scope>
    <scope>SUBUNIT</scope>
    <scope>DOMAIN</scope>
    <scope>DNA-BINDING</scope>
    <scope>MUTAGENESIS OF 14-ARG--ARG-16; 38-LYS--ARG-40 AND 77-ARG-ARG-78</scope>
    <source>
        <strain>K12</strain>
    </source>
</reference>
<reference key="14">
    <citation type="journal article" date="2015" name="Nature">
        <title>Foreign DNA capture during CRISPR-Cas adaptive immunity.</title>
        <authorList>
            <person name="Nunez J.K."/>
            <person name="Harrington L.B."/>
            <person name="Kranzusch P.J."/>
            <person name="Engelman A.N."/>
            <person name="Doudna J.A."/>
        </authorList>
    </citation>
    <scope>X-RAY CRYSTALLOGRAPHY (2.95 ANGSTROMS) IN COMPLEX WITH CAS1 AND DNA</scope>
    <scope>FUNCTION</scope>
    <scope>SUBUNIT</scope>
    <scope>DNA-BINDING</scope>
    <scope>MUTAGENESIS OF ARG-16; ARG-77 AND ARG-78</scope>
</reference>
<feature type="chain" id="PRO_0000169312" description="CRISPR-associated endoribonuclease Cas2">
    <location>
        <begin position="1"/>
        <end position="94"/>
    </location>
</feature>
<feature type="mutagenesis site" description="No effect on spacer acquisition, Cas1-Cas2 complex formation or CRISPR DNA-binding by complex." evidence="4 6">
    <original>E</original>
    <variation>A</variation>
    <variation>R</variation>
    <location>
        <position position="9"/>
    </location>
</feature>
<feature type="mutagenesis site" description="No effect on spacer acquisition." evidence="4">
    <original>N</original>
    <variation>A</variation>
    <location>
        <position position="10"/>
    </location>
</feature>
<feature type="mutagenesis site" description="No in vivspacer acquisition, significantly decreased protospacer binding." evidence="7">
    <original>RLR</original>
    <variation>ALA</variation>
    <location>
        <begin position="14"/>
        <end position="16"/>
    </location>
</feature>
<feature type="mutagenesis site" description="Slight decrease in spacer acquisition." evidence="4">
    <original>R</original>
    <variation>A</variation>
    <location>
        <position position="14"/>
    </location>
</feature>
<feature type="mutagenesis site" description="Slight decrease in spacer acquisition." evidence="4">
    <original>R</original>
    <variation>A</variation>
    <location>
        <position position="16"/>
    </location>
</feature>
<feature type="mutagenesis site" description="Dramatically decreased spacer acquisition in vivo." evidence="8">
    <original>R</original>
    <variation>E</variation>
    <location>
        <position position="16"/>
    </location>
</feature>
<feature type="mutagenesis site" description="Very little spacer acquisition." evidence="4">
    <original>R</original>
    <variation>A</variation>
    <location>
        <position position="18"/>
    </location>
</feature>
<feature type="mutagenesis site" description="Slight decrease in spacer acquisition." evidence="4">
    <original>R</original>
    <variation>A</variation>
    <location>
        <position position="27"/>
    </location>
</feature>
<feature type="mutagenesis site" description="Very little in vivo spacer acquisition." evidence="7">
    <original>KIR</original>
    <variation>AIA</variation>
    <location>
        <begin position="38"/>
        <end position="40"/>
    </location>
</feature>
<feature type="mutagenesis site" description="No effect on spacer acquisition." evidence="4">
    <original>E</original>
    <variation>A</variation>
    <location>
        <position position="65"/>
    </location>
</feature>
<feature type="mutagenesis site" description="Slight decrease in spacer acquisition, Cas1-Cas2 complex formation or CRISPR DNA-binding by complex. Loss of spacer acquisition; when associated with R-84." evidence="4">
    <original>E</original>
    <variation>R</variation>
    <location>
        <position position="65"/>
    </location>
</feature>
<feature type="mutagenesis site" description="No spacer acquisition, significantly decreased protospacer binding." evidence="7">
    <original>RR</original>
    <variation>AA</variation>
    <location>
        <begin position="77"/>
        <end position="78"/>
    </location>
</feature>
<feature type="mutagenesis site" description="No change in spacer acquisition in vivo." evidence="8">
    <original>R</original>
    <variation>E</variation>
    <location>
        <position position="77"/>
    </location>
</feature>
<feature type="mutagenesis site" description="Dramatically decreased spacer acquisition in vivo." evidence="8">
    <original>R</original>
    <variation>E</variation>
    <location>
        <position position="78"/>
    </location>
</feature>
<feature type="mutagenesis site" description="Loss of spacer acquisition, no Cas1-Cas2 complex formation, loss of CRISPR DNA-binding by complex (beta6-beta7 deletion)." evidence="4 6">
    <location>
        <begin position="79"/>
        <end position="94"/>
    </location>
</feature>
<feature type="mutagenesis site" description="No effect on spacer acquisition." evidence="4">
    <original>D</original>
    <variation>A</variation>
    <location>
        <position position="84"/>
    </location>
</feature>
<feature type="mutagenesis site" description="Slight decrease in spacer acquisition. Loss of spacer acquisition; when associated with R-65." evidence="4">
    <original>D</original>
    <variation>R</variation>
    <location>
        <position position="84"/>
    </location>
</feature>
<feature type="strand" evidence="12">
    <location>
        <begin position="3"/>
        <end position="10"/>
    </location>
</feature>
<feature type="helix" evidence="12">
    <location>
        <begin position="13"/>
        <end position="22"/>
    </location>
</feature>
<feature type="strand" evidence="12">
    <location>
        <begin position="23"/>
        <end position="27"/>
    </location>
</feature>
<feature type="strand" evidence="12">
    <location>
        <begin position="30"/>
        <end position="34"/>
    </location>
</feature>
<feature type="helix" evidence="12">
    <location>
        <begin position="37"/>
        <end position="50"/>
    </location>
</feature>
<feature type="strand" evidence="12">
    <location>
        <begin position="55"/>
        <end position="61"/>
    </location>
</feature>
<feature type="strand" evidence="12">
    <location>
        <begin position="63"/>
        <end position="66"/>
    </location>
</feature>
<feature type="strand" evidence="12">
    <location>
        <begin position="68"/>
        <end position="73"/>
    </location>
</feature>
<feature type="strand" evidence="13">
    <location>
        <begin position="79"/>
        <end position="83"/>
    </location>
</feature>
<feature type="strand" evidence="13">
    <location>
        <begin position="86"/>
        <end position="91"/>
    </location>
</feature>
<gene>
    <name type="primary">ygbF</name>
    <name type="synonym">cas2</name>
    <name type="ordered locus">b2754</name>
    <name type="ordered locus">JW5438</name>
</gene>
<protein>
    <recommendedName>
        <fullName>CRISPR-associated endoribonuclease Cas2</fullName>
        <ecNumber>3.1.-.-</ecNumber>
    </recommendedName>
</protein>
<name>CAS2_ECOLI</name>
<accession>P45956</accession>
<accession>Q2MA75</accession>